<dbReference type="EMBL" id="AAFI02000190">
    <property type="protein sequence ID" value="EAL61234.1"/>
    <property type="molecule type" value="Genomic_DNA"/>
</dbReference>
<dbReference type="RefSeq" id="XP_629595.1">
    <property type="nucleotide sequence ID" value="XM_629593.1"/>
</dbReference>
<dbReference type="SMR" id="Q54DA1"/>
<dbReference type="FunCoup" id="Q54DA1">
    <property type="interactions" value="346"/>
</dbReference>
<dbReference type="STRING" id="44689.Q54DA1"/>
<dbReference type="GlyGen" id="Q54DA1">
    <property type="glycosylation" value="2 sites"/>
</dbReference>
<dbReference type="PaxDb" id="44689-DDB0220098"/>
<dbReference type="EnsemblProtists" id="EAL61234">
    <property type="protein sequence ID" value="EAL61234"/>
    <property type="gene ID" value="DDB_G0292510"/>
</dbReference>
<dbReference type="GeneID" id="8628655"/>
<dbReference type="KEGG" id="ddi:DDB_G0292510"/>
<dbReference type="dictyBase" id="DDB_G0292510">
    <property type="gene designation" value="drap1"/>
</dbReference>
<dbReference type="VEuPathDB" id="AmoebaDB:DDB_G0292510"/>
<dbReference type="eggNOG" id="KOG1659">
    <property type="taxonomic scope" value="Eukaryota"/>
</dbReference>
<dbReference type="HOGENOM" id="CLU_495616_0_0_1"/>
<dbReference type="InParanoid" id="Q54DA1"/>
<dbReference type="OMA" id="EHNADNS"/>
<dbReference type="PRO" id="PR:Q54DA1"/>
<dbReference type="Proteomes" id="UP000002195">
    <property type="component" value="Chromosome 6"/>
</dbReference>
<dbReference type="GO" id="GO:0017054">
    <property type="term" value="C:negative cofactor 2 complex"/>
    <property type="evidence" value="ECO:0000318"/>
    <property type="project" value="GO_Central"/>
</dbReference>
<dbReference type="GO" id="GO:0005634">
    <property type="term" value="C:nucleus"/>
    <property type="evidence" value="ECO:0000318"/>
    <property type="project" value="GO_Central"/>
</dbReference>
<dbReference type="GO" id="GO:0001046">
    <property type="term" value="F:core promoter sequence-specific DNA binding"/>
    <property type="evidence" value="ECO:0000318"/>
    <property type="project" value="GO_Central"/>
</dbReference>
<dbReference type="GO" id="GO:0046982">
    <property type="term" value="F:protein heterodimerization activity"/>
    <property type="evidence" value="ECO:0007669"/>
    <property type="project" value="InterPro"/>
</dbReference>
<dbReference type="GO" id="GO:0016251">
    <property type="term" value="F:RNA polymerase II general transcription initiation factor activity"/>
    <property type="evidence" value="ECO:0000318"/>
    <property type="project" value="GO_Central"/>
</dbReference>
<dbReference type="GO" id="GO:0006366">
    <property type="term" value="P:transcription by RNA polymerase II"/>
    <property type="evidence" value="ECO:0000318"/>
    <property type="project" value="GO_Central"/>
</dbReference>
<dbReference type="CDD" id="cd22906">
    <property type="entry name" value="HFD_DRAP1"/>
    <property type="match status" value="1"/>
</dbReference>
<dbReference type="Gene3D" id="1.10.20.10">
    <property type="entry name" value="Histone, subunit A"/>
    <property type="match status" value="1"/>
</dbReference>
<dbReference type="InterPro" id="IPR003958">
    <property type="entry name" value="CBFA_NFYB_domain"/>
</dbReference>
<dbReference type="InterPro" id="IPR009072">
    <property type="entry name" value="Histone-fold"/>
</dbReference>
<dbReference type="InterPro" id="IPR050568">
    <property type="entry name" value="Transcr_DNA_Rep_Reg"/>
</dbReference>
<dbReference type="PANTHER" id="PTHR10252:SF5">
    <property type="entry name" value="DR1-ASSOCIATED COREPRESSOR"/>
    <property type="match status" value="1"/>
</dbReference>
<dbReference type="PANTHER" id="PTHR10252">
    <property type="entry name" value="HISTONE-LIKE TRANSCRIPTION FACTOR CCAAT-RELATED"/>
    <property type="match status" value="1"/>
</dbReference>
<dbReference type="Pfam" id="PF00808">
    <property type="entry name" value="CBFD_NFYB_HMF"/>
    <property type="match status" value="1"/>
</dbReference>
<dbReference type="SUPFAM" id="SSF47113">
    <property type="entry name" value="Histone-fold"/>
    <property type="match status" value="1"/>
</dbReference>
<reference key="1">
    <citation type="journal article" date="2005" name="Nature">
        <title>The genome of the social amoeba Dictyostelium discoideum.</title>
        <authorList>
            <person name="Eichinger L."/>
            <person name="Pachebat J.A."/>
            <person name="Gloeckner G."/>
            <person name="Rajandream M.A."/>
            <person name="Sucgang R."/>
            <person name="Berriman M."/>
            <person name="Song J."/>
            <person name="Olsen R."/>
            <person name="Szafranski K."/>
            <person name="Xu Q."/>
            <person name="Tunggal B."/>
            <person name="Kummerfeld S."/>
            <person name="Madera M."/>
            <person name="Konfortov B.A."/>
            <person name="Rivero F."/>
            <person name="Bankier A.T."/>
            <person name="Lehmann R."/>
            <person name="Hamlin N."/>
            <person name="Davies R."/>
            <person name="Gaudet P."/>
            <person name="Fey P."/>
            <person name="Pilcher K."/>
            <person name="Chen G."/>
            <person name="Saunders D."/>
            <person name="Sodergren E.J."/>
            <person name="Davis P."/>
            <person name="Kerhornou A."/>
            <person name="Nie X."/>
            <person name="Hall N."/>
            <person name="Anjard C."/>
            <person name="Hemphill L."/>
            <person name="Bason N."/>
            <person name="Farbrother P."/>
            <person name="Desany B."/>
            <person name="Just E."/>
            <person name="Morio T."/>
            <person name="Rost R."/>
            <person name="Churcher C.M."/>
            <person name="Cooper J."/>
            <person name="Haydock S."/>
            <person name="van Driessche N."/>
            <person name="Cronin A."/>
            <person name="Goodhead I."/>
            <person name="Muzny D.M."/>
            <person name="Mourier T."/>
            <person name="Pain A."/>
            <person name="Lu M."/>
            <person name="Harper D."/>
            <person name="Lindsay R."/>
            <person name="Hauser H."/>
            <person name="James K.D."/>
            <person name="Quiles M."/>
            <person name="Madan Babu M."/>
            <person name="Saito T."/>
            <person name="Buchrieser C."/>
            <person name="Wardroper A."/>
            <person name="Felder M."/>
            <person name="Thangavelu M."/>
            <person name="Johnson D."/>
            <person name="Knights A."/>
            <person name="Loulseged H."/>
            <person name="Mungall K.L."/>
            <person name="Oliver K."/>
            <person name="Price C."/>
            <person name="Quail M.A."/>
            <person name="Urushihara H."/>
            <person name="Hernandez J."/>
            <person name="Rabbinowitsch E."/>
            <person name="Steffen D."/>
            <person name="Sanders M."/>
            <person name="Ma J."/>
            <person name="Kohara Y."/>
            <person name="Sharp S."/>
            <person name="Simmonds M.N."/>
            <person name="Spiegler S."/>
            <person name="Tivey A."/>
            <person name="Sugano S."/>
            <person name="White B."/>
            <person name="Walker D."/>
            <person name="Woodward J.R."/>
            <person name="Winckler T."/>
            <person name="Tanaka Y."/>
            <person name="Shaulsky G."/>
            <person name="Schleicher M."/>
            <person name="Weinstock G.M."/>
            <person name="Rosenthal A."/>
            <person name="Cox E.C."/>
            <person name="Chisholm R.L."/>
            <person name="Gibbs R.A."/>
            <person name="Loomis W.F."/>
            <person name="Platzer M."/>
            <person name="Kay R.R."/>
            <person name="Williams J.G."/>
            <person name="Dear P.H."/>
            <person name="Noegel A.A."/>
            <person name="Barrell B.G."/>
            <person name="Kuspa A."/>
        </authorList>
    </citation>
    <scope>NUCLEOTIDE SEQUENCE [LARGE SCALE GENOMIC DNA]</scope>
    <source>
        <strain>AX4</strain>
    </source>
</reference>
<protein>
    <recommendedName>
        <fullName>Dr1-associated corepressor homolog</fullName>
    </recommendedName>
    <alternativeName>
        <fullName>Negative cofactor 2-alpha homolog</fullName>
        <shortName>NC2-alpha homolog</shortName>
    </alternativeName>
</protein>
<comment type="function">
    <text evidence="1">Involved in transcriptional regulation. Component of the NC2 complex which represses RNA polymerase II transcription through binding to tbp and thereby inhibiting the assembly of the preinitiation complex (By similarity).</text>
</comment>
<comment type="subcellular location">
    <subcellularLocation>
        <location evidence="3">Nucleus</location>
    </subcellularLocation>
</comment>
<comment type="similarity">
    <text evidence="3">Belongs to the NC2 alpha/DRAP1 family.</text>
</comment>
<accession>Q54DA1</accession>
<sequence length="550" mass="60893">MKKKYKTKFPMARIKKIMQKDEEVGKIASATPILISQCLELFMADLVMKTCKITQAKKGKVISVNHLKECIKQESTFDFLTEIVDRIPDDKNEKRGRPKKTEGEDGGEEEEEEEEEMDMGEEEEEEEDEDDDDSDEEEEEAPKKGGKGSRGGKGSRGGRGGARGGASTRKVKSETSPVLKNTTITTTTATTTPTPTPTPNFANSPKDIQSTSLKKPSARKSNTTSPKSSPFLSSSAGSIQSPPLNNNNNNNNNNNNNNNNNGNFNNNNNFNNNNNNFNNNNNFNNNNFNNNNNNNNFNNNSNNNNNNFNNNNFNNNNYNSNEDENNNNNNNNNNKNNNNNNNSNNSNNNNRGQQFLSSSTASTITLPSNQYQPLAPISLPVLNNSNNNNSSNNNNNNNNNNNNNNNNNNEHILGNLNNNNSNRKINTNFDEEDSNHNINKSNINSIMNSSNNSIDNKDNGFNSFTFSNNNSNFNDNNNYNPNNPNNNNDNNGNGIVLPSLSSTNSSSTLPSFSSVPPILNTNNSNSNNSISHILNNLNSKKPNVEDEDFD</sequence>
<gene>
    <name type="primary">drap1</name>
    <name type="ORF">DDB_G0292510</name>
</gene>
<evidence type="ECO:0000250" key="1"/>
<evidence type="ECO:0000256" key="2">
    <source>
        <dbReference type="SAM" id="MobiDB-lite"/>
    </source>
</evidence>
<evidence type="ECO:0000305" key="3"/>
<organism>
    <name type="scientific">Dictyostelium discoideum</name>
    <name type="common">Social amoeba</name>
    <dbReference type="NCBI Taxonomy" id="44689"/>
    <lineage>
        <taxon>Eukaryota</taxon>
        <taxon>Amoebozoa</taxon>
        <taxon>Evosea</taxon>
        <taxon>Eumycetozoa</taxon>
        <taxon>Dictyostelia</taxon>
        <taxon>Dictyosteliales</taxon>
        <taxon>Dictyosteliaceae</taxon>
        <taxon>Dictyostelium</taxon>
    </lineage>
</organism>
<feature type="chain" id="PRO_0000327677" description="Dr1-associated corepressor homolog">
    <location>
        <begin position="1"/>
        <end position="550"/>
    </location>
</feature>
<feature type="domain" description="Histone-fold">
    <location>
        <begin position="7"/>
        <end position="71"/>
    </location>
</feature>
<feature type="region of interest" description="Disordered" evidence="2">
    <location>
        <begin position="89"/>
        <end position="355"/>
    </location>
</feature>
<feature type="region of interest" description="Disordered" evidence="2">
    <location>
        <begin position="378"/>
        <end position="444"/>
    </location>
</feature>
<feature type="region of interest" description="Disordered" evidence="2">
    <location>
        <begin position="461"/>
        <end position="512"/>
    </location>
</feature>
<feature type="compositionally biased region" description="Basic and acidic residues" evidence="2">
    <location>
        <begin position="89"/>
        <end position="103"/>
    </location>
</feature>
<feature type="compositionally biased region" description="Acidic residues" evidence="2">
    <location>
        <begin position="104"/>
        <end position="140"/>
    </location>
</feature>
<feature type="compositionally biased region" description="Gly residues" evidence="2">
    <location>
        <begin position="148"/>
        <end position="164"/>
    </location>
</feature>
<feature type="compositionally biased region" description="Low complexity" evidence="2">
    <location>
        <begin position="182"/>
        <end position="193"/>
    </location>
</feature>
<feature type="compositionally biased region" description="Polar residues" evidence="2">
    <location>
        <begin position="200"/>
        <end position="224"/>
    </location>
</feature>
<feature type="compositionally biased region" description="Low complexity" evidence="2">
    <location>
        <begin position="225"/>
        <end position="238"/>
    </location>
</feature>
<feature type="compositionally biased region" description="Low complexity" evidence="2">
    <location>
        <begin position="245"/>
        <end position="350"/>
    </location>
</feature>
<feature type="compositionally biased region" description="Low complexity" evidence="2">
    <location>
        <begin position="382"/>
        <end position="422"/>
    </location>
</feature>
<name>NC2A_DICDI</name>
<proteinExistence type="inferred from homology"/>
<keyword id="KW-0238">DNA-binding</keyword>
<keyword id="KW-0539">Nucleus</keyword>
<keyword id="KW-1185">Reference proteome</keyword>
<keyword id="KW-0678">Repressor</keyword>
<keyword id="KW-0804">Transcription</keyword>
<keyword id="KW-0805">Transcription regulation</keyword>